<protein>
    <recommendedName>
        <fullName>N-acetylglucosaminyltransferase</fullName>
        <ecNumber>2.4.1.-</ecNumber>
    </recommendedName>
    <alternativeName>
        <fullName>Nodulation protein C</fullName>
    </alternativeName>
</protein>
<sequence>CRSMTMIRCSVAAVRARQFRFIGFSLHTFINIFFLLPLKAYALCTLSNSDWLSRGSAAKATGKGGKLDAIQDPVAASSPRESQENEAPLRRHNLARDATRSMAYDGICTDQ</sequence>
<feature type="chain" id="PRO_0000197196" description="N-acetylglucosaminyltransferase">
    <location>
        <begin position="1" status="less than"/>
        <end position="111"/>
    </location>
</feature>
<feature type="region of interest" description="Disordered" evidence="1">
    <location>
        <begin position="56"/>
        <end position="98"/>
    </location>
</feature>
<feature type="compositionally biased region" description="Basic and acidic residues" evidence="1">
    <location>
        <begin position="81"/>
        <end position="98"/>
    </location>
</feature>
<feature type="non-terminal residue">
    <location>
        <position position="1"/>
    </location>
</feature>
<proteinExistence type="inferred from homology"/>
<organism>
    <name type="scientific">Rhizobium tropici</name>
    <dbReference type="NCBI Taxonomy" id="398"/>
    <lineage>
        <taxon>Bacteria</taxon>
        <taxon>Pseudomonadati</taxon>
        <taxon>Pseudomonadota</taxon>
        <taxon>Alphaproteobacteria</taxon>
        <taxon>Hyphomicrobiales</taxon>
        <taxon>Rhizobiaceae</taxon>
        <taxon>Rhizobium/Agrobacterium group</taxon>
        <taxon>Rhizobium</taxon>
    </lineage>
</organism>
<evidence type="ECO:0000256" key="1">
    <source>
        <dbReference type="SAM" id="MobiDB-lite"/>
    </source>
</evidence>
<evidence type="ECO:0000305" key="2"/>
<name>NODC_RHITR</name>
<gene>
    <name type="primary">nodC</name>
</gene>
<dbReference type="EC" id="2.4.1.-"/>
<dbReference type="EMBL" id="S77171">
    <property type="protein sequence ID" value="AAB34509.1"/>
    <property type="molecule type" value="Genomic_DNA"/>
</dbReference>
<dbReference type="GO" id="GO:0005886">
    <property type="term" value="C:plasma membrane"/>
    <property type="evidence" value="ECO:0007669"/>
    <property type="project" value="UniProtKB-SubCell"/>
</dbReference>
<dbReference type="GO" id="GO:0016757">
    <property type="term" value="F:glycosyltransferase activity"/>
    <property type="evidence" value="ECO:0007669"/>
    <property type="project" value="UniProtKB-KW"/>
</dbReference>
<comment type="function">
    <text>Involved in the synthesis of Nod factor, a sulfated N-acyl-beta-1,4-tetrasaccharide of N-acetylglucosamine which initiates a series of events in the host plant species leading eventually to nodulation.</text>
</comment>
<comment type="subcellular location">
    <subcellularLocation>
        <location evidence="2">Cell membrane</location>
        <topology evidence="2">Peripheral membrane protein</topology>
    </subcellularLocation>
</comment>
<comment type="similarity">
    <text evidence="2">Belongs to the NodC/HAS family.</text>
</comment>
<accession>Q53513</accession>
<geneLocation type="plasmid">
    <name>sym</name>
</geneLocation>
<reference key="1">
    <citation type="journal article" date="1995" name="Mol. Plant Microbe Interact.">
        <title>The nodS gene of Rhizobium tropici strain CIAT899 is necessary for nodulation on Phaseolus vulgaris and on Leucaena leucocephala.</title>
        <authorList>
            <person name="Waelkens F."/>
            <person name="Voets T."/>
            <person name="Vlassak K."/>
            <person name="Vanderleyden J."/>
            <person name="van Rhijn P."/>
        </authorList>
    </citation>
    <scope>NUCLEOTIDE SEQUENCE [GENOMIC DNA]</scope>
    <source>
        <strain>CIAT899</strain>
    </source>
</reference>
<keyword id="KW-1003">Cell membrane</keyword>
<keyword id="KW-0328">Glycosyltransferase</keyword>
<keyword id="KW-0472">Membrane</keyword>
<keyword id="KW-0536">Nodulation</keyword>
<keyword id="KW-0614">Plasmid</keyword>
<keyword id="KW-0808">Transferase</keyword>